<gene>
    <name evidence="1" type="primary">gatY</name>
    <name type="ordered locus">BWG_1882</name>
</gene>
<reference key="1">
    <citation type="journal article" date="2009" name="J. Bacteriol.">
        <title>Genomic sequencing reveals regulatory mutations and recombinational events in the widely used MC4100 lineage of Escherichia coli K-12.</title>
        <authorList>
            <person name="Ferenci T."/>
            <person name="Zhou Z."/>
            <person name="Betteridge T."/>
            <person name="Ren Y."/>
            <person name="Liu Y."/>
            <person name="Feng L."/>
            <person name="Reeves P.R."/>
            <person name="Wang L."/>
        </authorList>
    </citation>
    <scope>NUCLEOTIDE SEQUENCE [LARGE SCALE GENOMIC DNA]</scope>
    <source>
        <strain>K12 / MC4100 / BW2952</strain>
    </source>
</reference>
<sequence>MYVVSTKQMLNNAQRGGYAVPAFNIHNLETMQVVVETAANLHAPVIIAGTPGTFTHAGTENLLALVSAMAKQYHHPLAIHLDHHTKFDDIAQKVRSGVRSVMIDASHLPFAQNISRVKEVVDFCHRFDVSVEAELGQLGGQEDDVQVNEADALYTNPAQAREFAEATGIDSLAVAIGTAHGMYASAPALDFSRLENIRQWVNLPLVLHGASGLSTKDIQQTIKLGICKINVATELKNAFSQALKNYLTEHPEATDPRDYLQSAKSAMRDVVSKVIADCGCEGRA</sequence>
<protein>
    <recommendedName>
        <fullName evidence="1">D-tagatose-1,6-bisphosphate aldolase subunit GatY</fullName>
        <shortName evidence="1">TBPA</shortName>
        <shortName evidence="1">TagBP aldolase</shortName>
        <ecNumber evidence="1">4.1.2.40</ecNumber>
    </recommendedName>
    <alternativeName>
        <fullName evidence="1">D-tagatose-bisphosphate aldolase class II</fullName>
    </alternativeName>
    <alternativeName>
        <fullName evidence="1">Tagatose-bisphosphate aldolase</fullName>
    </alternativeName>
</protein>
<name>GATY_ECOBW</name>
<organism>
    <name type="scientific">Escherichia coli (strain K12 / MC4100 / BW2952)</name>
    <dbReference type="NCBI Taxonomy" id="595496"/>
    <lineage>
        <taxon>Bacteria</taxon>
        <taxon>Pseudomonadati</taxon>
        <taxon>Pseudomonadota</taxon>
        <taxon>Gammaproteobacteria</taxon>
        <taxon>Enterobacterales</taxon>
        <taxon>Enterobacteriaceae</taxon>
        <taxon>Escherichia</taxon>
    </lineage>
</organism>
<feature type="chain" id="PRO_1000214220" description="D-tagatose-1,6-bisphosphate aldolase subunit GatY">
    <location>
        <begin position="1"/>
        <end position="284"/>
    </location>
</feature>
<feature type="active site" description="Proton donor" evidence="1">
    <location>
        <position position="82"/>
    </location>
</feature>
<feature type="binding site" evidence="1">
    <location>
        <position position="83"/>
    </location>
    <ligand>
        <name>Zn(2+)</name>
        <dbReference type="ChEBI" id="CHEBI:29105"/>
        <note>catalytic</note>
    </ligand>
</feature>
<feature type="binding site" evidence="1">
    <location>
        <position position="180"/>
    </location>
    <ligand>
        <name>Zn(2+)</name>
        <dbReference type="ChEBI" id="CHEBI:29105"/>
        <note>catalytic</note>
    </ligand>
</feature>
<feature type="binding site" evidence="1">
    <location>
        <position position="181"/>
    </location>
    <ligand>
        <name>dihydroxyacetone phosphate</name>
        <dbReference type="ChEBI" id="CHEBI:57642"/>
    </ligand>
</feature>
<feature type="binding site" evidence="1">
    <location>
        <position position="208"/>
    </location>
    <ligand>
        <name>Zn(2+)</name>
        <dbReference type="ChEBI" id="CHEBI:29105"/>
        <note>catalytic</note>
    </ligand>
</feature>
<feature type="binding site" evidence="1">
    <location>
        <begin position="209"/>
        <end position="211"/>
    </location>
    <ligand>
        <name>dihydroxyacetone phosphate</name>
        <dbReference type="ChEBI" id="CHEBI:57642"/>
    </ligand>
</feature>
<feature type="binding site" evidence="1">
    <location>
        <begin position="230"/>
        <end position="233"/>
    </location>
    <ligand>
        <name>dihydroxyacetone phosphate</name>
        <dbReference type="ChEBI" id="CHEBI:57642"/>
    </ligand>
</feature>
<accession>C4ZSI0</accession>
<comment type="function">
    <text evidence="1">Catalytic subunit of the tagatose-1,6-bisphosphate aldolase GatYZ, which catalyzes the reversible aldol condensation of dihydroxyacetone phosphate (DHAP or glycerone-phosphate) with glyceraldehyde 3-phosphate (G3P) to produce tagatose 1,6-bisphosphate (TBP). Requires GatZ subunit for full activity and stability. Is involved in the catabolism of galactitol.</text>
</comment>
<comment type="catalytic activity">
    <reaction evidence="1">
        <text>D-tagatofuranose 1,6-bisphosphate = D-glyceraldehyde 3-phosphate + dihydroxyacetone phosphate</text>
        <dbReference type="Rhea" id="RHEA:22948"/>
        <dbReference type="ChEBI" id="CHEBI:57642"/>
        <dbReference type="ChEBI" id="CHEBI:58694"/>
        <dbReference type="ChEBI" id="CHEBI:59776"/>
        <dbReference type="EC" id="4.1.2.40"/>
    </reaction>
</comment>
<comment type="cofactor">
    <cofactor evidence="1">
        <name>Zn(2+)</name>
        <dbReference type="ChEBI" id="CHEBI:29105"/>
    </cofactor>
    <text evidence="1">Binds 1 zinc ion per subunit.</text>
</comment>
<comment type="pathway">
    <text evidence="1">Carbohydrate metabolism; D-tagatose 6-phosphate degradation; D-glyceraldehyde 3-phosphate and glycerone phosphate from D-tagatose 6-phosphate: step 2/2.</text>
</comment>
<comment type="subunit">
    <text evidence="1">Forms a complex with GatZ.</text>
</comment>
<comment type="similarity">
    <text evidence="1">Belongs to the class II fructose-bisphosphate aldolase family. TagBP aldolase GatY subfamily.</text>
</comment>
<proteinExistence type="inferred from homology"/>
<evidence type="ECO:0000255" key="1">
    <source>
        <dbReference type="HAMAP-Rule" id="MF_01294"/>
    </source>
</evidence>
<dbReference type="EC" id="4.1.2.40" evidence="1"/>
<dbReference type="EMBL" id="CP001396">
    <property type="protein sequence ID" value="ACR63008.1"/>
    <property type="molecule type" value="Genomic_DNA"/>
</dbReference>
<dbReference type="RefSeq" id="WP_001307281.1">
    <property type="nucleotide sequence ID" value="NC_012759.1"/>
</dbReference>
<dbReference type="SMR" id="C4ZSI0"/>
<dbReference type="KEGG" id="ebw:BWG_1882"/>
<dbReference type="HOGENOM" id="CLU_040088_0_1_6"/>
<dbReference type="UniPathway" id="UPA00704">
    <property type="reaction ID" value="UER00716"/>
</dbReference>
<dbReference type="GO" id="GO:0005829">
    <property type="term" value="C:cytosol"/>
    <property type="evidence" value="ECO:0007669"/>
    <property type="project" value="TreeGrafter"/>
</dbReference>
<dbReference type="GO" id="GO:0009025">
    <property type="term" value="F:tagatose-bisphosphate aldolase activity"/>
    <property type="evidence" value="ECO:0007669"/>
    <property type="project" value="UniProtKB-UniRule"/>
</dbReference>
<dbReference type="GO" id="GO:0008270">
    <property type="term" value="F:zinc ion binding"/>
    <property type="evidence" value="ECO:0007669"/>
    <property type="project" value="UniProtKB-UniRule"/>
</dbReference>
<dbReference type="GO" id="GO:2001059">
    <property type="term" value="P:D-tagatose 6-phosphate catabolic process"/>
    <property type="evidence" value="ECO:0007669"/>
    <property type="project" value="UniProtKB-UniRule"/>
</dbReference>
<dbReference type="GO" id="GO:0019404">
    <property type="term" value="P:galactitol catabolic process"/>
    <property type="evidence" value="ECO:0007669"/>
    <property type="project" value="InterPro"/>
</dbReference>
<dbReference type="CDD" id="cd00947">
    <property type="entry name" value="TBP_aldolase_IIB"/>
    <property type="match status" value="1"/>
</dbReference>
<dbReference type="FunFam" id="3.20.20.70:FF:000043">
    <property type="entry name" value="D-tagatose-1,6-bisphosphate aldolase subunit GatY"/>
    <property type="match status" value="1"/>
</dbReference>
<dbReference type="Gene3D" id="3.20.20.70">
    <property type="entry name" value="Aldolase class I"/>
    <property type="match status" value="1"/>
</dbReference>
<dbReference type="HAMAP" id="MF_01294">
    <property type="entry name" value="TagBP_aldolase_GatY"/>
    <property type="match status" value="1"/>
</dbReference>
<dbReference type="InterPro" id="IPR013785">
    <property type="entry name" value="Aldolase_TIM"/>
</dbReference>
<dbReference type="InterPro" id="IPR050246">
    <property type="entry name" value="Class_II_FBP_aldolase"/>
</dbReference>
<dbReference type="InterPro" id="IPR000771">
    <property type="entry name" value="FBA_II"/>
</dbReference>
<dbReference type="InterPro" id="IPR011288">
    <property type="entry name" value="TagBP_ald_KbaY/GatY"/>
</dbReference>
<dbReference type="InterPro" id="IPR023955">
    <property type="entry name" value="TagBP_aldolase_GatY"/>
</dbReference>
<dbReference type="NCBIfam" id="TIGR00167">
    <property type="entry name" value="cbbA"/>
    <property type="match status" value="1"/>
</dbReference>
<dbReference type="NCBIfam" id="NF006626">
    <property type="entry name" value="PRK09195.1"/>
    <property type="match status" value="1"/>
</dbReference>
<dbReference type="NCBIfam" id="NF009374">
    <property type="entry name" value="PRK12737.1"/>
    <property type="match status" value="1"/>
</dbReference>
<dbReference type="NCBIfam" id="TIGR01858">
    <property type="entry name" value="tag_bisphos_ald"/>
    <property type="match status" value="1"/>
</dbReference>
<dbReference type="PANTHER" id="PTHR30304">
    <property type="entry name" value="D-TAGATOSE-1,6-BISPHOSPHATE ALDOLASE"/>
    <property type="match status" value="1"/>
</dbReference>
<dbReference type="PANTHER" id="PTHR30304:SF0">
    <property type="entry name" value="D-TAGATOSE-1,6-BISPHOSPHATE ALDOLASE SUBUNIT GATY-RELATED"/>
    <property type="match status" value="1"/>
</dbReference>
<dbReference type="Pfam" id="PF01116">
    <property type="entry name" value="F_bP_aldolase"/>
    <property type="match status" value="1"/>
</dbReference>
<dbReference type="PIRSF" id="PIRSF001359">
    <property type="entry name" value="F_bP_aldolase_II"/>
    <property type="match status" value="1"/>
</dbReference>
<dbReference type="SUPFAM" id="SSF51569">
    <property type="entry name" value="Aldolase"/>
    <property type="match status" value="1"/>
</dbReference>
<dbReference type="PROSITE" id="PS00602">
    <property type="entry name" value="ALDOLASE_CLASS_II_1"/>
    <property type="match status" value="1"/>
</dbReference>
<dbReference type="PROSITE" id="PS00806">
    <property type="entry name" value="ALDOLASE_CLASS_II_2"/>
    <property type="match status" value="1"/>
</dbReference>
<keyword id="KW-0298">Galactitol metabolism</keyword>
<keyword id="KW-0456">Lyase</keyword>
<keyword id="KW-0479">Metal-binding</keyword>
<keyword id="KW-0862">Zinc</keyword>